<evidence type="ECO:0000255" key="1">
    <source>
        <dbReference type="HAMAP-Rule" id="MF_00244"/>
    </source>
</evidence>
<reference key="1">
    <citation type="submission" date="2007-11" db="EMBL/GenBank/DDBJ databases">
        <title>Genome sequencing of phylogenetically and phenotypically diverse Coxiella burnetii isolates.</title>
        <authorList>
            <person name="Seshadri R."/>
            <person name="Samuel J.E."/>
        </authorList>
    </citation>
    <scope>NUCLEOTIDE SEQUENCE [LARGE SCALE GENOMIC DNA]</scope>
    <source>
        <strain>RSA 331 / Henzerling II</strain>
    </source>
</reference>
<feature type="chain" id="PRO_1000078378" description="Probable nicotinate-nucleotide adenylyltransferase">
    <location>
        <begin position="1"/>
        <end position="215"/>
    </location>
</feature>
<proteinExistence type="inferred from homology"/>
<accession>A9NC46</accession>
<keyword id="KW-0067">ATP-binding</keyword>
<keyword id="KW-0520">NAD</keyword>
<keyword id="KW-0547">Nucleotide-binding</keyword>
<keyword id="KW-0548">Nucleotidyltransferase</keyword>
<keyword id="KW-0662">Pyridine nucleotide biosynthesis</keyword>
<keyword id="KW-0808">Transferase</keyword>
<name>NADD_COXBR</name>
<comment type="function">
    <text evidence="1">Catalyzes the reversible adenylation of nicotinate mononucleotide (NaMN) to nicotinic acid adenine dinucleotide (NaAD).</text>
</comment>
<comment type="catalytic activity">
    <reaction evidence="1">
        <text>nicotinate beta-D-ribonucleotide + ATP + H(+) = deamido-NAD(+) + diphosphate</text>
        <dbReference type="Rhea" id="RHEA:22860"/>
        <dbReference type="ChEBI" id="CHEBI:15378"/>
        <dbReference type="ChEBI" id="CHEBI:30616"/>
        <dbReference type="ChEBI" id="CHEBI:33019"/>
        <dbReference type="ChEBI" id="CHEBI:57502"/>
        <dbReference type="ChEBI" id="CHEBI:58437"/>
        <dbReference type="EC" id="2.7.7.18"/>
    </reaction>
</comment>
<comment type="pathway">
    <text evidence="1">Cofactor biosynthesis; NAD(+) biosynthesis; deamido-NAD(+) from nicotinate D-ribonucleotide: step 1/1.</text>
</comment>
<comment type="similarity">
    <text evidence="1">Belongs to the NadD family.</text>
</comment>
<gene>
    <name evidence="1" type="primary">nadD</name>
    <name type="ordered locus">COXBURSA331_A0670</name>
</gene>
<organism>
    <name type="scientific">Coxiella burnetii (strain RSA 331 / Henzerling II)</name>
    <dbReference type="NCBI Taxonomy" id="360115"/>
    <lineage>
        <taxon>Bacteria</taxon>
        <taxon>Pseudomonadati</taxon>
        <taxon>Pseudomonadota</taxon>
        <taxon>Gammaproteobacteria</taxon>
        <taxon>Legionellales</taxon>
        <taxon>Coxiellaceae</taxon>
        <taxon>Coxiella</taxon>
    </lineage>
</organism>
<dbReference type="EC" id="2.7.7.18" evidence="1"/>
<dbReference type="EMBL" id="CP000890">
    <property type="protein sequence ID" value="ABX78876.1"/>
    <property type="molecule type" value="Genomic_DNA"/>
</dbReference>
<dbReference type="SMR" id="A9NC46"/>
<dbReference type="KEGG" id="cbs:COXBURSA331_A0670"/>
<dbReference type="HOGENOM" id="CLU_069765_0_0_6"/>
<dbReference type="UniPathway" id="UPA00253">
    <property type="reaction ID" value="UER00332"/>
</dbReference>
<dbReference type="GO" id="GO:0005524">
    <property type="term" value="F:ATP binding"/>
    <property type="evidence" value="ECO:0007669"/>
    <property type="project" value="UniProtKB-KW"/>
</dbReference>
<dbReference type="GO" id="GO:0004515">
    <property type="term" value="F:nicotinate-nucleotide adenylyltransferase activity"/>
    <property type="evidence" value="ECO:0007669"/>
    <property type="project" value="UniProtKB-UniRule"/>
</dbReference>
<dbReference type="GO" id="GO:0009435">
    <property type="term" value="P:NAD biosynthetic process"/>
    <property type="evidence" value="ECO:0007669"/>
    <property type="project" value="UniProtKB-UniRule"/>
</dbReference>
<dbReference type="CDD" id="cd02165">
    <property type="entry name" value="NMNAT"/>
    <property type="match status" value="1"/>
</dbReference>
<dbReference type="FunFam" id="3.40.50.620:FF:000427">
    <property type="entry name" value="Probable nicotinate-nucleotide adenylyltransferase"/>
    <property type="match status" value="1"/>
</dbReference>
<dbReference type="Gene3D" id="3.40.50.620">
    <property type="entry name" value="HUPs"/>
    <property type="match status" value="1"/>
</dbReference>
<dbReference type="HAMAP" id="MF_00244">
    <property type="entry name" value="NaMN_adenylyltr"/>
    <property type="match status" value="1"/>
</dbReference>
<dbReference type="InterPro" id="IPR004821">
    <property type="entry name" value="Cyt_trans-like"/>
</dbReference>
<dbReference type="InterPro" id="IPR005248">
    <property type="entry name" value="NadD/NMNAT"/>
</dbReference>
<dbReference type="InterPro" id="IPR014729">
    <property type="entry name" value="Rossmann-like_a/b/a_fold"/>
</dbReference>
<dbReference type="NCBIfam" id="TIGR00125">
    <property type="entry name" value="cyt_tran_rel"/>
    <property type="match status" value="1"/>
</dbReference>
<dbReference type="NCBIfam" id="TIGR00482">
    <property type="entry name" value="nicotinate (nicotinamide) nucleotide adenylyltransferase"/>
    <property type="match status" value="1"/>
</dbReference>
<dbReference type="NCBIfam" id="NF000839">
    <property type="entry name" value="PRK00071.1-1"/>
    <property type="match status" value="1"/>
</dbReference>
<dbReference type="PANTHER" id="PTHR39321">
    <property type="entry name" value="NICOTINATE-NUCLEOTIDE ADENYLYLTRANSFERASE-RELATED"/>
    <property type="match status" value="1"/>
</dbReference>
<dbReference type="PANTHER" id="PTHR39321:SF3">
    <property type="entry name" value="PHOSPHOPANTETHEINE ADENYLYLTRANSFERASE"/>
    <property type="match status" value="1"/>
</dbReference>
<dbReference type="Pfam" id="PF01467">
    <property type="entry name" value="CTP_transf_like"/>
    <property type="match status" value="1"/>
</dbReference>
<dbReference type="SUPFAM" id="SSF52374">
    <property type="entry name" value="Nucleotidylyl transferase"/>
    <property type="match status" value="1"/>
</dbReference>
<sequence>MFPLLGLFGGTFDPIHKGHLALANELIQKLPSLTEIQFIPSRQPPHRPSPLASPADRLEMIKRAIANQPNLILNDVEIKGNDISYTINTLKILRPLFLTHALCFILSTDAFADFKHWHQSSVILEYCHLIVVNRPNYRLPQQPWLSDLLSHHQTENAEDLGRFQFGKIFFQTLSPRPISATQIRHYLAKGDYEIVAPLLPKTVLTYIKAHKLYQQ</sequence>
<protein>
    <recommendedName>
        <fullName evidence="1">Probable nicotinate-nucleotide adenylyltransferase</fullName>
        <ecNumber evidence="1">2.7.7.18</ecNumber>
    </recommendedName>
    <alternativeName>
        <fullName evidence="1">Deamido-NAD(+) diphosphorylase</fullName>
    </alternativeName>
    <alternativeName>
        <fullName evidence="1">Deamido-NAD(+) pyrophosphorylase</fullName>
    </alternativeName>
    <alternativeName>
        <fullName evidence="1">Nicotinate mononucleotide adenylyltransferase</fullName>
        <shortName evidence="1">NaMN adenylyltransferase</shortName>
    </alternativeName>
</protein>